<protein>
    <recommendedName>
        <fullName evidence="1">Ribulose bisphosphate carboxylase large chain</fullName>
        <shortName evidence="1">RuBisCO large subunit</shortName>
        <ecNumber evidence="1">4.1.1.39</ecNumber>
    </recommendedName>
</protein>
<feature type="chain" id="PRO_0000062530" description="Ribulose bisphosphate carboxylase large chain">
    <location>
        <begin position="1" status="less than"/>
        <end position="465"/>
    </location>
</feature>
<feature type="active site" description="Proton acceptor" evidence="1">
    <location>
        <position position="165"/>
    </location>
</feature>
<feature type="active site" description="Proton acceptor" evidence="1">
    <location>
        <position position="284"/>
    </location>
</feature>
<feature type="binding site" description="in homodimeric partner" evidence="1">
    <location>
        <position position="113"/>
    </location>
    <ligand>
        <name>substrate</name>
    </ligand>
</feature>
<feature type="binding site" evidence="1">
    <location>
        <position position="163"/>
    </location>
    <ligand>
        <name>substrate</name>
    </ligand>
</feature>
<feature type="binding site" evidence="1">
    <location>
        <position position="167"/>
    </location>
    <ligand>
        <name>substrate</name>
    </ligand>
</feature>
<feature type="binding site" description="via carbamate group" evidence="1">
    <location>
        <position position="191"/>
    </location>
    <ligand>
        <name>Mg(2+)</name>
        <dbReference type="ChEBI" id="CHEBI:18420"/>
    </ligand>
</feature>
<feature type="binding site" evidence="1">
    <location>
        <position position="193"/>
    </location>
    <ligand>
        <name>Mg(2+)</name>
        <dbReference type="ChEBI" id="CHEBI:18420"/>
    </ligand>
</feature>
<feature type="binding site" evidence="1">
    <location>
        <position position="194"/>
    </location>
    <ligand>
        <name>Mg(2+)</name>
        <dbReference type="ChEBI" id="CHEBI:18420"/>
    </ligand>
</feature>
<feature type="binding site" evidence="1">
    <location>
        <position position="285"/>
    </location>
    <ligand>
        <name>substrate</name>
    </ligand>
</feature>
<feature type="binding site" evidence="1">
    <location>
        <position position="317"/>
    </location>
    <ligand>
        <name>substrate</name>
    </ligand>
</feature>
<feature type="binding site" evidence="1">
    <location>
        <position position="369"/>
    </location>
    <ligand>
        <name>substrate</name>
    </ligand>
</feature>
<feature type="site" description="Transition state stabilizer" evidence="1">
    <location>
        <position position="324"/>
    </location>
</feature>
<feature type="modified residue" description="N6,N6,N6-trimethyllysine" evidence="1">
    <location>
        <position position="4"/>
    </location>
</feature>
<feature type="modified residue" description="N6-carboxylysine" evidence="1">
    <location>
        <position position="191"/>
    </location>
</feature>
<feature type="disulfide bond" description="Interchain; in linked form" evidence="1">
    <location>
        <position position="237"/>
    </location>
</feature>
<feature type="non-terminal residue">
    <location>
        <position position="1"/>
    </location>
</feature>
<keyword id="KW-0113">Calvin cycle</keyword>
<keyword id="KW-0120">Carbon dioxide fixation</keyword>
<keyword id="KW-0150">Chloroplast</keyword>
<keyword id="KW-1015">Disulfide bond</keyword>
<keyword id="KW-0456">Lyase</keyword>
<keyword id="KW-0460">Magnesium</keyword>
<keyword id="KW-0479">Metal-binding</keyword>
<keyword id="KW-0488">Methylation</keyword>
<keyword id="KW-0503">Monooxygenase</keyword>
<keyword id="KW-0560">Oxidoreductase</keyword>
<keyword id="KW-0601">Photorespiration</keyword>
<keyword id="KW-0602">Photosynthesis</keyword>
<keyword id="KW-0934">Plastid</keyword>
<evidence type="ECO:0000255" key="1">
    <source>
        <dbReference type="HAMAP-Rule" id="MF_01338"/>
    </source>
</evidence>
<proteinExistence type="inferred from homology"/>
<geneLocation type="chloroplast"/>
<sequence length="465" mass="51583">VGFKAGVKDYKLTYYTPDYETKDTDILAAFRVTPQPGVPPEEAGAAVAAESSTGTWTTVWTDGLTSLDRYKGRCYHIEPVAGEENQYIAYVAYPLDLFEEGSVTNMFTSIVGNVFGFKALRALRLEDLRIPPAYSKTFQGPPHGIQVERDKLNKYGRPLLGCTIKPKLGLSAKNYGRAVYECLRGGLDFTKDDENVNSQPFMRWRDRFVFCAEAIYKAQAETGEIKGHYLNATAGTCEEMIKRAVFARELGVPIVMHDYLTGGFTANTSLAHYCRDNGLLLHIHRAMHAVIDRQKNHGMHFRVLAKALRLSGGDHVHAGTVVGKLEGEREITLGFVDLLRDDYVEKDRSRGIYFTQDWVSLPGVLPVASGGIHVWHMPALTEIFGDDSVLQFGGGTLGHPWGNAPGAVANRVALEACVQARNEGRDLAREGNEIIREASKWSPELAAACEVWKEIKFEFEAMDTL</sequence>
<comment type="function">
    <text evidence="1">RuBisCO catalyzes two reactions: the carboxylation of D-ribulose 1,5-bisphosphate, the primary event in carbon dioxide fixation, as well as the oxidative fragmentation of the pentose substrate in the photorespiration process. Both reactions occur simultaneously and in competition at the same active site.</text>
</comment>
<comment type="catalytic activity">
    <reaction evidence="1">
        <text>2 (2R)-3-phosphoglycerate + 2 H(+) = D-ribulose 1,5-bisphosphate + CO2 + H2O</text>
        <dbReference type="Rhea" id="RHEA:23124"/>
        <dbReference type="ChEBI" id="CHEBI:15377"/>
        <dbReference type="ChEBI" id="CHEBI:15378"/>
        <dbReference type="ChEBI" id="CHEBI:16526"/>
        <dbReference type="ChEBI" id="CHEBI:57870"/>
        <dbReference type="ChEBI" id="CHEBI:58272"/>
        <dbReference type="EC" id="4.1.1.39"/>
    </reaction>
</comment>
<comment type="catalytic activity">
    <reaction evidence="1">
        <text>D-ribulose 1,5-bisphosphate + O2 = 2-phosphoglycolate + (2R)-3-phosphoglycerate + 2 H(+)</text>
        <dbReference type="Rhea" id="RHEA:36631"/>
        <dbReference type="ChEBI" id="CHEBI:15378"/>
        <dbReference type="ChEBI" id="CHEBI:15379"/>
        <dbReference type="ChEBI" id="CHEBI:57870"/>
        <dbReference type="ChEBI" id="CHEBI:58033"/>
        <dbReference type="ChEBI" id="CHEBI:58272"/>
    </reaction>
</comment>
<comment type="cofactor">
    <cofactor evidence="1">
        <name>Mg(2+)</name>
        <dbReference type="ChEBI" id="CHEBI:18420"/>
    </cofactor>
    <text evidence="1">Binds 1 Mg(2+) ion per subunit.</text>
</comment>
<comment type="subunit">
    <text evidence="1">Heterohexadecamer of 8 large chains and 8 small chains; disulfide-linked. The disulfide link is formed within the large subunit homodimers.</text>
</comment>
<comment type="subcellular location">
    <subcellularLocation>
        <location>Plastid</location>
        <location>Chloroplast</location>
    </subcellularLocation>
</comment>
<comment type="PTM">
    <text evidence="1">The disulfide bond which can form in the large chain dimeric partners within the hexadecamer appears to be associated with oxidative stress and protein turnover.</text>
</comment>
<comment type="miscellaneous">
    <text evidence="1">The basic functional RuBisCO is composed of a large chain homodimer in a 'head-to-tail' conformation. In form I RuBisCO this homodimer is arranged in a barrel-like tetramer with the small subunits forming a tetrameric 'cap' on each end of the 'barrel'.</text>
</comment>
<comment type="similarity">
    <text evidence="1">Belongs to the RuBisCO large chain family. Type I subfamily.</text>
</comment>
<name>RBL_MANZA</name>
<accession>P28430</accession>
<reference key="1">
    <citation type="journal article" date="1992" name="Science">
        <title>Carnivorous plants: phylogeny and structural evolution.</title>
        <authorList>
            <person name="Albert V.A."/>
            <person name="Williams S.E."/>
            <person name="Chase M.W."/>
        </authorList>
    </citation>
    <scope>NUCLEOTIDE SEQUENCE [GENOMIC DNA]</scope>
</reference>
<gene>
    <name evidence="1" type="primary">rbcL</name>
</gene>
<dbReference type="EC" id="4.1.1.39" evidence="1"/>
<dbReference type="EMBL" id="L01932">
    <property type="protein sequence ID" value="AAA84363.2"/>
    <property type="molecule type" value="Genomic_DNA"/>
</dbReference>
<dbReference type="SMR" id="P28430"/>
<dbReference type="GO" id="GO:0009507">
    <property type="term" value="C:chloroplast"/>
    <property type="evidence" value="ECO:0007669"/>
    <property type="project" value="UniProtKB-SubCell"/>
</dbReference>
<dbReference type="GO" id="GO:0000287">
    <property type="term" value="F:magnesium ion binding"/>
    <property type="evidence" value="ECO:0007669"/>
    <property type="project" value="InterPro"/>
</dbReference>
<dbReference type="GO" id="GO:0004497">
    <property type="term" value="F:monooxygenase activity"/>
    <property type="evidence" value="ECO:0007669"/>
    <property type="project" value="UniProtKB-KW"/>
</dbReference>
<dbReference type="GO" id="GO:0016984">
    <property type="term" value="F:ribulose-bisphosphate carboxylase activity"/>
    <property type="evidence" value="ECO:0007669"/>
    <property type="project" value="UniProtKB-EC"/>
</dbReference>
<dbReference type="GO" id="GO:0009853">
    <property type="term" value="P:photorespiration"/>
    <property type="evidence" value="ECO:0007669"/>
    <property type="project" value="UniProtKB-KW"/>
</dbReference>
<dbReference type="GO" id="GO:0019253">
    <property type="term" value="P:reductive pentose-phosphate cycle"/>
    <property type="evidence" value="ECO:0007669"/>
    <property type="project" value="UniProtKB-KW"/>
</dbReference>
<dbReference type="CDD" id="cd08212">
    <property type="entry name" value="RuBisCO_large_I"/>
    <property type="match status" value="1"/>
</dbReference>
<dbReference type="FunFam" id="3.20.20.110:FF:000001">
    <property type="entry name" value="Ribulose bisphosphate carboxylase large chain"/>
    <property type="match status" value="1"/>
</dbReference>
<dbReference type="FunFam" id="3.30.70.150:FF:000001">
    <property type="entry name" value="Ribulose bisphosphate carboxylase large chain"/>
    <property type="match status" value="1"/>
</dbReference>
<dbReference type="Gene3D" id="3.20.20.110">
    <property type="entry name" value="Ribulose bisphosphate carboxylase, large subunit, C-terminal domain"/>
    <property type="match status" value="1"/>
</dbReference>
<dbReference type="Gene3D" id="3.30.70.150">
    <property type="entry name" value="RuBisCO large subunit, N-terminal domain"/>
    <property type="match status" value="1"/>
</dbReference>
<dbReference type="HAMAP" id="MF_01338">
    <property type="entry name" value="RuBisCO_L_type1"/>
    <property type="match status" value="1"/>
</dbReference>
<dbReference type="InterPro" id="IPR033966">
    <property type="entry name" value="RuBisCO"/>
</dbReference>
<dbReference type="InterPro" id="IPR020878">
    <property type="entry name" value="RuBisCo_large_chain_AS"/>
</dbReference>
<dbReference type="InterPro" id="IPR000685">
    <property type="entry name" value="RuBisCO_lsu_C"/>
</dbReference>
<dbReference type="InterPro" id="IPR036376">
    <property type="entry name" value="RuBisCO_lsu_C_sf"/>
</dbReference>
<dbReference type="InterPro" id="IPR017443">
    <property type="entry name" value="RuBisCO_lsu_fd_N"/>
</dbReference>
<dbReference type="InterPro" id="IPR036422">
    <property type="entry name" value="RuBisCO_lsu_N_sf"/>
</dbReference>
<dbReference type="InterPro" id="IPR020888">
    <property type="entry name" value="RuBisCO_lsuI"/>
</dbReference>
<dbReference type="NCBIfam" id="NF003252">
    <property type="entry name" value="PRK04208.1"/>
    <property type="match status" value="1"/>
</dbReference>
<dbReference type="PANTHER" id="PTHR42704">
    <property type="entry name" value="RIBULOSE BISPHOSPHATE CARBOXYLASE"/>
    <property type="match status" value="1"/>
</dbReference>
<dbReference type="PANTHER" id="PTHR42704:SF16">
    <property type="entry name" value="RIBULOSE BISPHOSPHATE CARBOXYLASE LARGE CHAIN"/>
    <property type="match status" value="1"/>
</dbReference>
<dbReference type="Pfam" id="PF00016">
    <property type="entry name" value="RuBisCO_large"/>
    <property type="match status" value="1"/>
</dbReference>
<dbReference type="Pfam" id="PF02788">
    <property type="entry name" value="RuBisCO_large_N"/>
    <property type="match status" value="1"/>
</dbReference>
<dbReference type="SFLD" id="SFLDG01052">
    <property type="entry name" value="RuBisCO"/>
    <property type="match status" value="1"/>
</dbReference>
<dbReference type="SFLD" id="SFLDS00014">
    <property type="entry name" value="RuBisCO"/>
    <property type="match status" value="1"/>
</dbReference>
<dbReference type="SFLD" id="SFLDG00301">
    <property type="entry name" value="RuBisCO-like_proteins"/>
    <property type="match status" value="1"/>
</dbReference>
<dbReference type="SUPFAM" id="SSF51649">
    <property type="entry name" value="RuBisCo, C-terminal domain"/>
    <property type="match status" value="1"/>
</dbReference>
<dbReference type="SUPFAM" id="SSF54966">
    <property type="entry name" value="RuBisCO, large subunit, small (N-terminal) domain"/>
    <property type="match status" value="1"/>
</dbReference>
<dbReference type="PROSITE" id="PS00157">
    <property type="entry name" value="RUBISCO_LARGE"/>
    <property type="match status" value="1"/>
</dbReference>
<organism>
    <name type="scientific">Manilkara zapota</name>
    <name type="common">Sapodilla plum</name>
    <name type="synonym">Achras zapota</name>
    <dbReference type="NCBI Taxonomy" id="3741"/>
    <lineage>
        <taxon>Eukaryota</taxon>
        <taxon>Viridiplantae</taxon>
        <taxon>Streptophyta</taxon>
        <taxon>Embryophyta</taxon>
        <taxon>Tracheophyta</taxon>
        <taxon>Spermatophyta</taxon>
        <taxon>Magnoliopsida</taxon>
        <taxon>eudicotyledons</taxon>
        <taxon>Gunneridae</taxon>
        <taxon>Pentapetalae</taxon>
        <taxon>asterids</taxon>
        <taxon>Ericales</taxon>
        <taxon>Sapotaceae</taxon>
        <taxon>Sapotoideae</taxon>
        <taxon>Manilkara</taxon>
    </lineage>
</organism>